<keyword id="KW-1185">Reference proteome</keyword>
<keyword id="KW-0687">Ribonucleoprotein</keyword>
<keyword id="KW-0689">Ribosomal protein</keyword>
<dbReference type="EMBL" id="CP001251">
    <property type="protein sequence ID" value="ACK42782.1"/>
    <property type="molecule type" value="Genomic_DNA"/>
</dbReference>
<dbReference type="RefSeq" id="WP_012547624.1">
    <property type="nucleotide sequence ID" value="NC_011661.1"/>
</dbReference>
<dbReference type="RefSeq" id="YP_002353396.1">
    <property type="nucleotide sequence ID" value="NC_011661.1"/>
</dbReference>
<dbReference type="SMR" id="B8E2D8"/>
<dbReference type="FunCoup" id="B8E2D8">
    <property type="interactions" value="176"/>
</dbReference>
<dbReference type="STRING" id="515635.Dtur_1508"/>
<dbReference type="EnsemblBacteria" id="ACK42782">
    <property type="protein sequence ID" value="ACK42782"/>
    <property type="gene ID" value="Dtur_1508"/>
</dbReference>
<dbReference type="KEGG" id="dtu:Dtur_1508"/>
<dbReference type="PATRIC" id="fig|515635.4.peg.1557"/>
<dbReference type="eggNOG" id="COG0227">
    <property type="taxonomic scope" value="Bacteria"/>
</dbReference>
<dbReference type="HOGENOM" id="CLU_064548_7_0_0"/>
<dbReference type="InParanoid" id="B8E2D8"/>
<dbReference type="OrthoDB" id="9805609at2"/>
<dbReference type="Proteomes" id="UP000007719">
    <property type="component" value="Chromosome"/>
</dbReference>
<dbReference type="GO" id="GO:1990904">
    <property type="term" value="C:ribonucleoprotein complex"/>
    <property type="evidence" value="ECO:0007669"/>
    <property type="project" value="UniProtKB-KW"/>
</dbReference>
<dbReference type="GO" id="GO:0005840">
    <property type="term" value="C:ribosome"/>
    <property type="evidence" value="ECO:0007669"/>
    <property type="project" value="UniProtKB-KW"/>
</dbReference>
<dbReference type="GO" id="GO:0003735">
    <property type="term" value="F:structural constituent of ribosome"/>
    <property type="evidence" value="ECO:0007669"/>
    <property type="project" value="InterPro"/>
</dbReference>
<dbReference type="GO" id="GO:0006412">
    <property type="term" value="P:translation"/>
    <property type="evidence" value="ECO:0007669"/>
    <property type="project" value="UniProtKB-UniRule"/>
</dbReference>
<dbReference type="FunFam" id="2.30.170.40:FF:000002">
    <property type="entry name" value="50S ribosomal protein L28"/>
    <property type="match status" value="1"/>
</dbReference>
<dbReference type="Gene3D" id="2.30.170.40">
    <property type="entry name" value="Ribosomal protein L28/L24"/>
    <property type="match status" value="1"/>
</dbReference>
<dbReference type="HAMAP" id="MF_00373">
    <property type="entry name" value="Ribosomal_bL28"/>
    <property type="match status" value="1"/>
</dbReference>
<dbReference type="InterPro" id="IPR050096">
    <property type="entry name" value="Bacterial_rp_bL28"/>
</dbReference>
<dbReference type="InterPro" id="IPR026569">
    <property type="entry name" value="Ribosomal_bL28"/>
</dbReference>
<dbReference type="InterPro" id="IPR034704">
    <property type="entry name" value="Ribosomal_bL28/bL31-like_sf"/>
</dbReference>
<dbReference type="InterPro" id="IPR001383">
    <property type="entry name" value="Ribosomal_bL28_bact-type"/>
</dbReference>
<dbReference type="InterPro" id="IPR037147">
    <property type="entry name" value="Ribosomal_bL28_sf"/>
</dbReference>
<dbReference type="NCBIfam" id="TIGR00009">
    <property type="entry name" value="L28"/>
    <property type="match status" value="1"/>
</dbReference>
<dbReference type="PANTHER" id="PTHR39080">
    <property type="entry name" value="50S RIBOSOMAL PROTEIN L28"/>
    <property type="match status" value="1"/>
</dbReference>
<dbReference type="PANTHER" id="PTHR39080:SF1">
    <property type="entry name" value="LARGE RIBOSOMAL SUBUNIT PROTEIN BL28A"/>
    <property type="match status" value="1"/>
</dbReference>
<dbReference type="Pfam" id="PF00830">
    <property type="entry name" value="Ribosomal_L28"/>
    <property type="match status" value="1"/>
</dbReference>
<dbReference type="SUPFAM" id="SSF143800">
    <property type="entry name" value="L28p-like"/>
    <property type="match status" value="1"/>
</dbReference>
<protein>
    <recommendedName>
        <fullName evidence="1">Large ribosomal subunit protein bL28</fullName>
    </recommendedName>
    <alternativeName>
        <fullName evidence="2">50S ribosomal protein L28</fullName>
    </alternativeName>
</protein>
<name>RL28_DICTD</name>
<evidence type="ECO:0000255" key="1">
    <source>
        <dbReference type="HAMAP-Rule" id="MF_00373"/>
    </source>
</evidence>
<evidence type="ECO:0000305" key="2"/>
<feature type="chain" id="PRO_1000121624" description="Large ribosomal subunit protein bL28">
    <location>
        <begin position="1"/>
        <end position="63"/>
    </location>
</feature>
<proteinExistence type="inferred from homology"/>
<reference key="1">
    <citation type="journal article" date="2016" name="Front. Microbiol.">
        <title>The complete genome sequence of hyperthermophile Dictyoglomus turgidum DSM 6724 reveals a specialized carbohydrate fermentor.</title>
        <authorList>
            <person name="Brumm P.J."/>
            <person name="Gowda K."/>
            <person name="Robb F.T."/>
            <person name="Mead D.A."/>
        </authorList>
    </citation>
    <scope>NUCLEOTIDE SEQUENCE [LARGE SCALE GENOMIC DNA]</scope>
    <source>
        <strain>DSM 6724 / Z-1310</strain>
    </source>
</reference>
<comment type="similarity">
    <text evidence="1">Belongs to the bacterial ribosomal protein bL28 family.</text>
</comment>
<gene>
    <name evidence="1" type="primary">rpmB</name>
    <name type="ordered locus">Dtur_1508</name>
</gene>
<accession>B8E2D8</accession>
<organism>
    <name type="scientific">Dictyoglomus turgidum (strain DSM 6724 / Z-1310)</name>
    <dbReference type="NCBI Taxonomy" id="515635"/>
    <lineage>
        <taxon>Bacteria</taxon>
        <taxon>Pseudomonadati</taxon>
        <taxon>Dictyoglomota</taxon>
        <taxon>Dictyoglomia</taxon>
        <taxon>Dictyoglomales</taxon>
        <taxon>Dictyoglomaceae</taxon>
        <taxon>Dictyoglomus</taxon>
    </lineage>
</organism>
<sequence>MSRRCEICGKGPWTGLQVSHSHRRTKTRWLPNLHKVRALVNGKVKTIKVCTRCLKAGKVQKVV</sequence>